<protein>
    <recommendedName>
        <fullName>Receptor-type tyrosine-protein phosphatase mu</fullName>
        <shortName>Protein-tyrosine phosphatase mu</shortName>
        <shortName>R-PTP-mu</shortName>
        <ecNumber>3.1.3.48</ecNumber>
    </recommendedName>
</protein>
<keyword id="KW-0130">Cell adhesion</keyword>
<keyword id="KW-1003">Cell membrane</keyword>
<keyword id="KW-1015">Disulfide bond</keyword>
<keyword id="KW-0325">Glycoprotein</keyword>
<keyword id="KW-0378">Hydrolase</keyword>
<keyword id="KW-0393">Immunoglobulin domain</keyword>
<keyword id="KW-0472">Membrane</keyword>
<keyword id="KW-0597">Phosphoprotein</keyword>
<keyword id="KW-0904">Protein phosphatase</keyword>
<keyword id="KW-0675">Receptor</keyword>
<keyword id="KW-1185">Reference proteome</keyword>
<keyword id="KW-0677">Repeat</keyword>
<keyword id="KW-0732">Signal</keyword>
<keyword id="KW-0812">Transmembrane</keyword>
<keyword id="KW-1133">Transmembrane helix</keyword>
<evidence type="ECO:0000250" key="1"/>
<evidence type="ECO:0000250" key="2">
    <source>
        <dbReference type="UniProtKB" id="P28827"/>
    </source>
</evidence>
<evidence type="ECO:0000255" key="3"/>
<evidence type="ECO:0000255" key="4">
    <source>
        <dbReference type="PROSITE-ProRule" id="PRU00114"/>
    </source>
</evidence>
<evidence type="ECO:0000255" key="5">
    <source>
        <dbReference type="PROSITE-ProRule" id="PRU00128"/>
    </source>
</evidence>
<evidence type="ECO:0000255" key="6">
    <source>
        <dbReference type="PROSITE-ProRule" id="PRU00160"/>
    </source>
</evidence>
<evidence type="ECO:0000255" key="7">
    <source>
        <dbReference type="PROSITE-ProRule" id="PRU00316"/>
    </source>
</evidence>
<evidence type="ECO:0000305" key="8"/>
<sequence>MRTLGTCLVTLAGLLLTAAGETFSGGCLFDEPYSTCGYSQADEDDFNWEQVNTLTKPTSDPWMPSGSFMLVNTSGKPEGQRAHLLLPQLKENDTHCIDFHYFVSSKSNAAPGLLNVYVKVNNGPLGNPIWNISGDPTRTWHRAELAISTFWPNFYQVIFEVVTSGHQGYLAIDEVKVLGHPCTRTPHFLRIQNVEVNAGQFATFQCSAIGRTVAGDRLWLQGIDVRDAPLKEIKVTSSRRFIASFNVVNTTKRDAGKYRCMICTEGGVGISNYAELVVKEPPVPIAPPQLASVGATYLWIQLNANSINGDGPIVAREVEYCTASGSWNDRQPVDSTSYKIGHLDPDTEYEISVLLTRPGEGGTGSPGPALRTRTKCADPMRGPRKLEVVEVKSRQITIRWEPFGYNVTRCHSYNLTVHYGYQVGGQEQVREEVSWDTDNSHPQHTITNLSPYTNVSVKLILMNPEGRKESQELTVQTDEDLPGAVPTESIQGSAFEEKIFLQWREPTQTYGVITLYEITYKAVSSFDPEIDLSNQSGRVSKLGNETHFLFFGLYPGTTYSFTIRASTAKGFGPPATNQFTTKISAPSMPAYEFETPLNQTDNTVTVMLKPAQSRGAPVSVYQIVVEEERPRRTKKTTEILKCYPVPIHFQNASILNSQYYFAAEFPADSLQAAQPFTIGDNKTYNGYWNTPLLPHKSYRIYYQAASRANGETKIDCVRVATKGAVTPKPVPEPEKQTDHTVKIAGVIAGILLFVIIFLGVVLVMKKRKLAKKRKETMSSTRQEMTVMVNSMDKSYAEQGTNCDEAFSFMGTHNLNGRSVSSPSSFTMKTNTLSTSVPNSYYPDETHTMASDTSSLAQPHTYKKREAADVPYQTGQLHPAIRVADLLQHITQMKCAEGYGFKEEYESFFEGQSAPWDSAKKDENRMKNRYGNIIAYDHSRVRLQMLEGDNNSDYINGNYIDGYHRPNHYIATQGPMQETIYDFWRMVWHENTASIIMVTNLVEVGRVKCCKYWPDDTEIYKDIKVTLIDTELLAEYVIRTFAVEKRGIHEIREIRQFHFTGWPDHGVPYHATGLLGFVRQVKSKSPPNAGPLVVHCSAGAGRTGCFIVIDIMLDMAEREGVVDIYNCVRELRSRRVNMVQTEEQYVFIHDAILEACLCGDTSIPASQVRSLYYDMNKLDPQTNSSQIKEEFRTLNMVTPTLRVEDCSIALLPRNHEKNRCMDILPPDRCLPFLITIDGESSNYINAALMDSYKQPSAFIVTQHPLPNTVKDFWRLVLDYHCTSVVMLNDVDPAQLCPQYWPENGVHRHGPIQVEFVSADLEEDIISRIFRIYNASRPQDGHRMVQQFQFLGWPMYRDTPVSKRSFLKLIRQVDKWQEEYNGGEGRTVVHCLNGGGRSGTFCAISIVCEMLRHQRTVDVFHAVKTLRNNKPNMVDLLDQYKFCYEVALEYLNSG</sequence>
<feature type="signal peptide" evidence="3">
    <location>
        <begin position="1"/>
        <end position="20"/>
    </location>
</feature>
<feature type="chain" id="PRO_0000025449" description="Receptor-type tyrosine-protein phosphatase mu">
    <location>
        <begin position="21"/>
        <end position="1452"/>
    </location>
</feature>
<feature type="topological domain" description="Extracellular" evidence="3">
    <location>
        <begin position="21"/>
        <end position="742"/>
    </location>
</feature>
<feature type="transmembrane region" description="Helical" evidence="3">
    <location>
        <begin position="743"/>
        <end position="764"/>
    </location>
</feature>
<feature type="topological domain" description="Cytoplasmic" evidence="3">
    <location>
        <begin position="765"/>
        <end position="1452"/>
    </location>
</feature>
<feature type="domain" description="MAM" evidence="5">
    <location>
        <begin position="22"/>
        <end position="184"/>
    </location>
</feature>
<feature type="domain" description="Ig-like C2-type">
    <location>
        <begin position="186"/>
        <end position="277"/>
    </location>
</feature>
<feature type="domain" description="Fibronectin type-III 1" evidence="7">
    <location>
        <begin position="284"/>
        <end position="379"/>
    </location>
</feature>
<feature type="domain" description="Fibronectin type-III 2" evidence="7">
    <location>
        <begin position="382"/>
        <end position="480"/>
    </location>
</feature>
<feature type="domain" description="Fibronectin type-III 3" evidence="7">
    <location>
        <begin position="481"/>
        <end position="587"/>
    </location>
</feature>
<feature type="domain" description="Fibronectin type-III 4" evidence="7">
    <location>
        <begin position="589"/>
        <end position="671"/>
    </location>
</feature>
<feature type="domain" description="Tyrosine-protein phosphatase 1" evidence="6">
    <location>
        <begin position="900"/>
        <end position="1154"/>
    </location>
</feature>
<feature type="domain" description="Tyrosine-protein phosphatase 2" evidence="6">
    <location>
        <begin position="1186"/>
        <end position="1448"/>
    </location>
</feature>
<feature type="active site" description="Phosphocysteine intermediate" evidence="1">
    <location>
        <position position="1095"/>
    </location>
</feature>
<feature type="active site" description="Phosphocysteine intermediate" evidence="1">
    <location>
        <position position="1389"/>
    </location>
</feature>
<feature type="binding site" evidence="1">
    <location>
        <position position="1063"/>
    </location>
    <ligand>
        <name>substrate</name>
    </ligand>
</feature>
<feature type="binding site" evidence="1">
    <location>
        <begin position="1095"/>
        <end position="1101"/>
    </location>
    <ligand>
        <name>substrate</name>
    </ligand>
</feature>
<feature type="binding site" evidence="1">
    <location>
        <position position="1139"/>
    </location>
    <ligand>
        <name>substrate</name>
    </ligand>
</feature>
<feature type="modified residue" description="Phosphoserine" evidence="2">
    <location>
        <position position="821"/>
    </location>
</feature>
<feature type="glycosylation site" description="N-linked (GlcNAc...) asparagine" evidence="3">
    <location>
        <position position="72"/>
    </location>
</feature>
<feature type="glycosylation site" description="N-linked (GlcNAc...) asparagine" evidence="3">
    <location>
        <position position="92"/>
    </location>
</feature>
<feature type="glycosylation site" description="N-linked (GlcNAc...) asparagine" evidence="3">
    <location>
        <position position="131"/>
    </location>
</feature>
<feature type="glycosylation site" description="N-linked (GlcNAc...) asparagine" evidence="3">
    <location>
        <position position="249"/>
    </location>
</feature>
<feature type="glycosylation site" description="N-linked (GlcNAc...) asparagine" evidence="3">
    <location>
        <position position="406"/>
    </location>
</feature>
<feature type="glycosylation site" description="N-linked (GlcNAc...) asparagine" evidence="3">
    <location>
        <position position="414"/>
    </location>
</feature>
<feature type="glycosylation site" description="N-linked (GlcNAc...) asparagine" evidence="3">
    <location>
        <position position="454"/>
    </location>
</feature>
<feature type="glycosylation site" description="N-linked (GlcNAc...) asparagine" evidence="3">
    <location>
        <position position="534"/>
    </location>
</feature>
<feature type="glycosylation site" description="N-linked (GlcNAc...) asparagine" evidence="3">
    <location>
        <position position="544"/>
    </location>
</feature>
<feature type="glycosylation site" description="N-linked (GlcNAc...) asparagine" evidence="3">
    <location>
        <position position="598"/>
    </location>
</feature>
<feature type="glycosylation site" description="N-linked (GlcNAc...) asparagine" evidence="3">
    <location>
        <position position="651"/>
    </location>
</feature>
<feature type="glycosylation site" description="N-linked (GlcNAc...) asparagine" evidence="3">
    <location>
        <position position="681"/>
    </location>
</feature>
<feature type="disulfide bond" evidence="4">
    <location>
        <begin position="27"/>
        <end position="36"/>
    </location>
</feature>
<feature type="disulfide bond" evidence="4">
    <location>
        <begin position="96"/>
        <end position="182"/>
    </location>
</feature>
<feature type="disulfide bond" evidence="4">
    <location>
        <begin position="206"/>
        <end position="260"/>
    </location>
</feature>
<feature type="sequence conflict" description="In Ref. 1; CAA41225." evidence="8" ref="1">
    <original>R</original>
    <variation>P</variation>
    <location>
        <position position="1384"/>
    </location>
</feature>
<name>PTPRM_MOUSE</name>
<proteinExistence type="evidence at protein level"/>
<dbReference type="EC" id="3.1.3.48"/>
<dbReference type="EMBL" id="X58287">
    <property type="protein sequence ID" value="CAA41225.1"/>
    <property type="molecule type" value="mRNA"/>
</dbReference>
<dbReference type="EMBL" id="AC109261">
    <property type="status" value="NOT_ANNOTATED_CDS"/>
    <property type="molecule type" value="Genomic_DNA"/>
</dbReference>
<dbReference type="EMBL" id="AC139750">
    <property type="status" value="NOT_ANNOTATED_CDS"/>
    <property type="molecule type" value="Genomic_DNA"/>
</dbReference>
<dbReference type="EMBL" id="AC154596">
    <property type="status" value="NOT_ANNOTATED_CDS"/>
    <property type="molecule type" value="Genomic_DNA"/>
</dbReference>
<dbReference type="EMBL" id="AC163731">
    <property type="status" value="NOT_ANNOTATED_CDS"/>
    <property type="molecule type" value="Genomic_DNA"/>
</dbReference>
<dbReference type="EMBL" id="CT030654">
    <property type="status" value="NOT_ANNOTATED_CDS"/>
    <property type="molecule type" value="Genomic_DNA"/>
</dbReference>
<dbReference type="EMBL" id="AK220171">
    <property type="protein sequence ID" value="BAD90356.1"/>
    <property type="molecule type" value="mRNA"/>
</dbReference>
<dbReference type="CCDS" id="CCDS28948.1"/>
<dbReference type="PIR" id="S17670">
    <property type="entry name" value="S17670"/>
</dbReference>
<dbReference type="RefSeq" id="NP_033010.2">
    <property type="nucleotide sequence ID" value="NM_008984.3"/>
</dbReference>
<dbReference type="SMR" id="P28828"/>
<dbReference type="BioGRID" id="202502">
    <property type="interactions" value="7"/>
</dbReference>
<dbReference type="FunCoup" id="P28828">
    <property type="interactions" value="806"/>
</dbReference>
<dbReference type="IntAct" id="P28828">
    <property type="interactions" value="4"/>
</dbReference>
<dbReference type="MINT" id="P28828"/>
<dbReference type="STRING" id="10090.ENSMUSP00000153662"/>
<dbReference type="CarbonylDB" id="P28828"/>
<dbReference type="GlyConnect" id="2673">
    <property type="glycosylation" value="1 N-Linked glycan (1 site)"/>
</dbReference>
<dbReference type="GlyCosmos" id="P28828">
    <property type="glycosylation" value="12 sites, 1 glycan"/>
</dbReference>
<dbReference type="GlyGen" id="P28828">
    <property type="glycosylation" value="13 sites, 9 N-linked glycans (10 sites)"/>
</dbReference>
<dbReference type="iPTMnet" id="P28828"/>
<dbReference type="PhosphoSitePlus" id="P28828"/>
<dbReference type="PaxDb" id="10090-ENSMUSP00000045603"/>
<dbReference type="PeptideAtlas" id="P28828"/>
<dbReference type="ProteomicsDB" id="301947"/>
<dbReference type="Pumba" id="P28828"/>
<dbReference type="Antibodypedia" id="21926">
    <property type="antibodies" value="223 antibodies from 33 providers"/>
</dbReference>
<dbReference type="DNASU" id="19274"/>
<dbReference type="Ensembl" id="ENSMUST00000223982.2">
    <property type="protein sequence ID" value="ENSMUSP00000153662.2"/>
    <property type="gene ID" value="ENSMUSG00000033278.11"/>
</dbReference>
<dbReference type="GeneID" id="19274"/>
<dbReference type="KEGG" id="mmu:19274"/>
<dbReference type="UCSC" id="uc008dka.2">
    <property type="organism name" value="mouse"/>
</dbReference>
<dbReference type="AGR" id="MGI:102694"/>
<dbReference type="CTD" id="5797"/>
<dbReference type="MGI" id="MGI:102694">
    <property type="gene designation" value="Ptprm"/>
</dbReference>
<dbReference type="VEuPathDB" id="HostDB:ENSMUSG00000033278"/>
<dbReference type="eggNOG" id="KOG4228">
    <property type="taxonomic scope" value="Eukaryota"/>
</dbReference>
<dbReference type="GeneTree" id="ENSGT00940000155020"/>
<dbReference type="HOGENOM" id="CLU_001645_0_1_1"/>
<dbReference type="InParanoid" id="P28828"/>
<dbReference type="OMA" id="XPMQETI"/>
<dbReference type="OrthoDB" id="10253954at2759"/>
<dbReference type="PhylomeDB" id="P28828"/>
<dbReference type="TreeFam" id="TF312900"/>
<dbReference type="BioGRID-ORCS" id="19274">
    <property type="hits" value="1 hit in 77 CRISPR screens"/>
</dbReference>
<dbReference type="ChiTaRS" id="Ptprm">
    <property type="organism name" value="mouse"/>
</dbReference>
<dbReference type="PRO" id="PR:P28828"/>
<dbReference type="Proteomes" id="UP000000589">
    <property type="component" value="Chromosome 17"/>
</dbReference>
<dbReference type="RNAct" id="P28828">
    <property type="molecule type" value="protein"/>
</dbReference>
<dbReference type="Bgee" id="ENSMUSG00000033278">
    <property type="expression patterns" value="Expressed in left lung lobe and 264 other cell types or tissues"/>
</dbReference>
<dbReference type="ExpressionAtlas" id="P28828">
    <property type="expression patterns" value="baseline and differential"/>
</dbReference>
<dbReference type="GO" id="GO:0005912">
    <property type="term" value="C:adherens junction"/>
    <property type="evidence" value="ECO:0000250"/>
    <property type="project" value="UniProtKB"/>
</dbReference>
<dbReference type="GO" id="GO:0030027">
    <property type="term" value="C:lamellipodium"/>
    <property type="evidence" value="ECO:0000250"/>
    <property type="project" value="UniProtKB"/>
</dbReference>
<dbReference type="GO" id="GO:0048471">
    <property type="term" value="C:perinuclear region of cytoplasm"/>
    <property type="evidence" value="ECO:0000250"/>
    <property type="project" value="UniProtKB"/>
</dbReference>
<dbReference type="GO" id="GO:0005886">
    <property type="term" value="C:plasma membrane"/>
    <property type="evidence" value="ECO:0007669"/>
    <property type="project" value="UniProtKB-SubCell"/>
</dbReference>
<dbReference type="GO" id="GO:0045296">
    <property type="term" value="F:cadherin binding"/>
    <property type="evidence" value="ECO:0000250"/>
    <property type="project" value="UniProtKB"/>
</dbReference>
<dbReference type="GO" id="GO:0005001">
    <property type="term" value="F:transmembrane receptor protein tyrosine phosphatase activity"/>
    <property type="evidence" value="ECO:0000250"/>
    <property type="project" value="UniProtKB"/>
</dbReference>
<dbReference type="GO" id="GO:0007156">
    <property type="term" value="P:homophilic cell adhesion via plasma membrane adhesion molecules"/>
    <property type="evidence" value="ECO:0000250"/>
    <property type="project" value="UniProtKB"/>
</dbReference>
<dbReference type="GO" id="GO:0016525">
    <property type="term" value="P:negative regulation of angiogenesis"/>
    <property type="evidence" value="ECO:0000250"/>
    <property type="project" value="UniProtKB"/>
</dbReference>
<dbReference type="GO" id="GO:0010596">
    <property type="term" value="P:negative regulation of endothelial cell migration"/>
    <property type="evidence" value="ECO:0000250"/>
    <property type="project" value="UniProtKB"/>
</dbReference>
<dbReference type="GO" id="GO:0001937">
    <property type="term" value="P:negative regulation of endothelial cell proliferation"/>
    <property type="evidence" value="ECO:0000250"/>
    <property type="project" value="UniProtKB"/>
</dbReference>
<dbReference type="GO" id="GO:0031175">
    <property type="term" value="P:neuron projection development"/>
    <property type="evidence" value="ECO:0000250"/>
    <property type="project" value="UniProtKB"/>
</dbReference>
<dbReference type="GO" id="GO:0009410">
    <property type="term" value="P:response to xenobiotic stimulus"/>
    <property type="evidence" value="ECO:0000250"/>
    <property type="project" value="UniProtKB"/>
</dbReference>
<dbReference type="GO" id="GO:0010842">
    <property type="term" value="P:retina layer formation"/>
    <property type="evidence" value="ECO:0000250"/>
    <property type="project" value="UniProtKB"/>
</dbReference>
<dbReference type="GO" id="GO:0031290">
    <property type="term" value="P:retinal ganglion cell axon guidance"/>
    <property type="evidence" value="ECO:0000250"/>
    <property type="project" value="UniProtKB"/>
</dbReference>
<dbReference type="GO" id="GO:0007165">
    <property type="term" value="P:signal transduction"/>
    <property type="evidence" value="ECO:0000250"/>
    <property type="project" value="UniProtKB"/>
</dbReference>
<dbReference type="GO" id="GO:0042311">
    <property type="term" value="P:vasodilation"/>
    <property type="evidence" value="ECO:0000315"/>
    <property type="project" value="MGI"/>
</dbReference>
<dbReference type="CDD" id="cd00063">
    <property type="entry name" value="FN3"/>
    <property type="match status" value="3"/>
</dbReference>
<dbReference type="CDD" id="cd06263">
    <property type="entry name" value="MAM"/>
    <property type="match status" value="1"/>
</dbReference>
<dbReference type="CDD" id="cd14633">
    <property type="entry name" value="R-PTPc-M-1"/>
    <property type="match status" value="1"/>
</dbReference>
<dbReference type="CDD" id="cd14635">
    <property type="entry name" value="R-PTPc-M-2"/>
    <property type="match status" value="1"/>
</dbReference>
<dbReference type="FunFam" id="3.90.190.10:FF:000003">
    <property type="entry name" value="receptor-type tyrosine-protein phosphatase kappa isoform X1"/>
    <property type="match status" value="1"/>
</dbReference>
<dbReference type="FunFam" id="3.90.190.10:FF:000005">
    <property type="entry name" value="receptor-type tyrosine-protein phosphatase kappa isoform X1"/>
    <property type="match status" value="1"/>
</dbReference>
<dbReference type="FunFam" id="2.60.40.10:FF:000019">
    <property type="entry name" value="receptor-type tyrosine-protein phosphatase kappa isoform X2"/>
    <property type="match status" value="1"/>
</dbReference>
<dbReference type="FunFam" id="2.60.120.200:FF:000006">
    <property type="entry name" value="receptor-type tyrosine-protein phosphatase T isoform X1"/>
    <property type="match status" value="1"/>
</dbReference>
<dbReference type="FunFam" id="2.60.40.10:FF:000152">
    <property type="entry name" value="receptor-type tyrosine-protein phosphatase T isoform X1"/>
    <property type="match status" value="1"/>
</dbReference>
<dbReference type="FunFam" id="2.60.40.10:FF:000009">
    <property type="entry name" value="receptor-type tyrosine-protein phosphatase U isoform X1"/>
    <property type="match status" value="1"/>
</dbReference>
<dbReference type="FunFam" id="2.60.40.10:FF:000025">
    <property type="entry name" value="receptor-type tyrosine-protein phosphatase U isoform X2"/>
    <property type="match status" value="1"/>
</dbReference>
<dbReference type="Gene3D" id="2.60.120.200">
    <property type="match status" value="1"/>
</dbReference>
<dbReference type="Gene3D" id="2.60.40.10">
    <property type="entry name" value="Immunoglobulins"/>
    <property type="match status" value="4"/>
</dbReference>
<dbReference type="Gene3D" id="3.90.190.10">
    <property type="entry name" value="Protein tyrosine phosphatase superfamily"/>
    <property type="match status" value="2"/>
</dbReference>
<dbReference type="InterPro" id="IPR013320">
    <property type="entry name" value="ConA-like_dom_sf"/>
</dbReference>
<dbReference type="InterPro" id="IPR003961">
    <property type="entry name" value="FN3_dom"/>
</dbReference>
<dbReference type="InterPro" id="IPR036116">
    <property type="entry name" value="FN3_sf"/>
</dbReference>
<dbReference type="InterPro" id="IPR007110">
    <property type="entry name" value="Ig-like_dom"/>
</dbReference>
<dbReference type="InterPro" id="IPR036179">
    <property type="entry name" value="Ig-like_dom_sf"/>
</dbReference>
<dbReference type="InterPro" id="IPR013783">
    <property type="entry name" value="Ig-like_fold"/>
</dbReference>
<dbReference type="InterPro" id="IPR003599">
    <property type="entry name" value="Ig_sub"/>
</dbReference>
<dbReference type="InterPro" id="IPR013151">
    <property type="entry name" value="Immunoglobulin_dom"/>
</dbReference>
<dbReference type="InterPro" id="IPR000998">
    <property type="entry name" value="MAM_dom"/>
</dbReference>
<dbReference type="InterPro" id="IPR029021">
    <property type="entry name" value="Prot-tyrosine_phosphatase-like"/>
</dbReference>
<dbReference type="InterPro" id="IPR000242">
    <property type="entry name" value="PTP_cat"/>
</dbReference>
<dbReference type="InterPro" id="IPR045911">
    <property type="entry name" value="R-PTP-mu_cat_rpt1"/>
</dbReference>
<dbReference type="InterPro" id="IPR051622">
    <property type="entry name" value="R-tyr_protein_phosphatases"/>
</dbReference>
<dbReference type="InterPro" id="IPR016130">
    <property type="entry name" value="Tyr_Pase_AS"/>
</dbReference>
<dbReference type="InterPro" id="IPR003595">
    <property type="entry name" value="Tyr_Pase_cat"/>
</dbReference>
<dbReference type="InterPro" id="IPR000387">
    <property type="entry name" value="Tyr_Pase_dom"/>
</dbReference>
<dbReference type="PANTHER" id="PTHR24051:SF11">
    <property type="entry name" value="PROTEIN TYROSINE PHOSPHATASE, RECEPTOR TYPE, M"/>
    <property type="match status" value="1"/>
</dbReference>
<dbReference type="PANTHER" id="PTHR24051">
    <property type="entry name" value="SUSHI DOMAIN-CONTAINING PROTEIN 1"/>
    <property type="match status" value="1"/>
</dbReference>
<dbReference type="Pfam" id="PF00041">
    <property type="entry name" value="fn3"/>
    <property type="match status" value="1"/>
</dbReference>
<dbReference type="Pfam" id="PF23144">
    <property type="entry name" value="Fn3_PTPRU"/>
    <property type="match status" value="1"/>
</dbReference>
<dbReference type="Pfam" id="PF00047">
    <property type="entry name" value="ig"/>
    <property type="match status" value="1"/>
</dbReference>
<dbReference type="Pfam" id="PF00629">
    <property type="entry name" value="MAM"/>
    <property type="match status" value="1"/>
</dbReference>
<dbReference type="Pfam" id="PF00102">
    <property type="entry name" value="Y_phosphatase"/>
    <property type="match status" value="2"/>
</dbReference>
<dbReference type="PRINTS" id="PR00020">
    <property type="entry name" value="MAMDOMAIN"/>
</dbReference>
<dbReference type="PRINTS" id="PR00700">
    <property type="entry name" value="PRTYPHPHTASE"/>
</dbReference>
<dbReference type="SMART" id="SM00060">
    <property type="entry name" value="FN3"/>
    <property type="match status" value="3"/>
</dbReference>
<dbReference type="SMART" id="SM00409">
    <property type="entry name" value="IG"/>
    <property type="match status" value="1"/>
</dbReference>
<dbReference type="SMART" id="SM00137">
    <property type="entry name" value="MAM"/>
    <property type="match status" value="1"/>
</dbReference>
<dbReference type="SMART" id="SM00194">
    <property type="entry name" value="PTPc"/>
    <property type="match status" value="2"/>
</dbReference>
<dbReference type="SMART" id="SM00404">
    <property type="entry name" value="PTPc_motif"/>
    <property type="match status" value="2"/>
</dbReference>
<dbReference type="SUPFAM" id="SSF52799">
    <property type="entry name" value="(Phosphotyrosine protein) phosphatases II"/>
    <property type="match status" value="2"/>
</dbReference>
<dbReference type="SUPFAM" id="SSF49899">
    <property type="entry name" value="Concanavalin A-like lectins/glucanases"/>
    <property type="match status" value="1"/>
</dbReference>
<dbReference type="SUPFAM" id="SSF49265">
    <property type="entry name" value="Fibronectin type III"/>
    <property type="match status" value="2"/>
</dbReference>
<dbReference type="SUPFAM" id="SSF48726">
    <property type="entry name" value="Immunoglobulin"/>
    <property type="match status" value="1"/>
</dbReference>
<dbReference type="PROSITE" id="PS50853">
    <property type="entry name" value="FN3"/>
    <property type="match status" value="3"/>
</dbReference>
<dbReference type="PROSITE" id="PS50835">
    <property type="entry name" value="IG_LIKE"/>
    <property type="match status" value="1"/>
</dbReference>
<dbReference type="PROSITE" id="PS00740">
    <property type="entry name" value="MAM_1"/>
    <property type="match status" value="1"/>
</dbReference>
<dbReference type="PROSITE" id="PS50060">
    <property type="entry name" value="MAM_2"/>
    <property type="match status" value="1"/>
</dbReference>
<dbReference type="PROSITE" id="PS00383">
    <property type="entry name" value="TYR_PHOSPHATASE_1"/>
    <property type="match status" value="2"/>
</dbReference>
<dbReference type="PROSITE" id="PS50056">
    <property type="entry name" value="TYR_PHOSPHATASE_2"/>
    <property type="match status" value="2"/>
</dbReference>
<dbReference type="PROSITE" id="PS50055">
    <property type="entry name" value="TYR_PHOSPHATASE_PTP"/>
    <property type="match status" value="2"/>
</dbReference>
<accession>P28828</accession>
<accession>E9QKU4</accession>
<accession>Q571L8</accession>
<comment type="function">
    <text evidence="2">Receptor protein-tyrosine phosphatase that mediates homotypic cell-cell interactions and plays a role in adipogenic differentiation via modulation of p120 catenin/CTNND1 phosphorylation. Promotes CTNND1 dephosphorylation and prevents its cytoplasmic localization where it inhibits SLC2A4 membrane trafficking. In turn, SLC2A4 is directed to the plasma membrane and performs its glucose transporter function.</text>
</comment>
<comment type="catalytic activity">
    <reaction evidence="2">
        <text>O-phospho-L-tyrosyl-[protein] + H2O = L-tyrosyl-[protein] + phosphate</text>
        <dbReference type="Rhea" id="RHEA:10684"/>
        <dbReference type="Rhea" id="RHEA-COMP:10136"/>
        <dbReference type="Rhea" id="RHEA-COMP:20101"/>
        <dbReference type="ChEBI" id="CHEBI:15377"/>
        <dbReference type="ChEBI" id="CHEBI:43474"/>
        <dbReference type="ChEBI" id="CHEBI:46858"/>
        <dbReference type="ChEBI" id="CHEBI:61978"/>
        <dbReference type="EC" id="3.1.3.48"/>
    </reaction>
</comment>
<comment type="subunit">
    <text evidence="2">Homodimer.</text>
</comment>
<comment type="interaction">
    <interactant intactId="EBI-8539266">
        <id>P28828</id>
    </interactant>
    <interactant intactId="EBI-8398907">
        <id>Q62470</id>
        <label>Itga3</label>
    </interactant>
    <organismsDiffer>false</organismsDiffer>
    <experiments>3</experiments>
</comment>
<comment type="subcellular location">
    <subcellularLocation>
        <location evidence="2">Cell membrane</location>
        <topology evidence="2">Single-pass type I membrane protein</topology>
    </subcellularLocation>
    <text evidence="2">Localizes in regions of cell-cell contact.</text>
</comment>
<comment type="tissue specificity">
    <text>Most abundant in lung, less in brain and heart.</text>
</comment>
<comment type="similarity">
    <text evidence="8">Belongs to the protein-tyrosine phosphatase family. Receptor class 2B subfamily.</text>
</comment>
<gene>
    <name type="primary">Ptprm</name>
    <name type="synonym">Kiaa4044</name>
</gene>
<reference key="1">
    <citation type="journal article" date="1991" name="FEBS Lett.">
        <title>Cloning, expression and chromosomal localization of a new putative receptor-like protein tyrosine phosphatase.</title>
        <authorList>
            <person name="Gebbink M.F.B.G."/>
            <person name="van Etten I."/>
            <person name="Hateboer G."/>
            <person name="Suijkerbuijk R."/>
            <person name="Beijersbergen R."/>
            <person name="Geurts van Kessel A."/>
            <person name="Moolenaar W.H."/>
        </authorList>
    </citation>
    <scope>NUCLEOTIDE SEQUENCE [MRNA]</scope>
    <source>
        <tissue>Lung</tissue>
    </source>
</reference>
<reference key="2">
    <citation type="journal article" date="2009" name="PLoS Biol.">
        <title>Lineage-specific biology revealed by a finished genome assembly of the mouse.</title>
        <authorList>
            <person name="Church D.M."/>
            <person name="Goodstadt L."/>
            <person name="Hillier L.W."/>
            <person name="Zody M.C."/>
            <person name="Goldstein S."/>
            <person name="She X."/>
            <person name="Bult C.J."/>
            <person name="Agarwala R."/>
            <person name="Cherry J.L."/>
            <person name="DiCuccio M."/>
            <person name="Hlavina W."/>
            <person name="Kapustin Y."/>
            <person name="Meric P."/>
            <person name="Maglott D."/>
            <person name="Birtle Z."/>
            <person name="Marques A.C."/>
            <person name="Graves T."/>
            <person name="Zhou S."/>
            <person name="Teague B."/>
            <person name="Potamousis K."/>
            <person name="Churas C."/>
            <person name="Place M."/>
            <person name="Herschleb J."/>
            <person name="Runnheim R."/>
            <person name="Forrest D."/>
            <person name="Amos-Landgraf J."/>
            <person name="Schwartz D.C."/>
            <person name="Cheng Z."/>
            <person name="Lindblad-Toh K."/>
            <person name="Eichler E.E."/>
            <person name="Ponting C.P."/>
        </authorList>
    </citation>
    <scope>NUCLEOTIDE SEQUENCE [LARGE SCALE GENOMIC DNA]</scope>
    <source>
        <strain>C57BL/6J</strain>
    </source>
</reference>
<reference key="3">
    <citation type="submission" date="2005-02" db="EMBL/GenBank/DDBJ databases">
        <title>Prediction of the coding sequences of mouse homologues of KIAA gene. The complete nucleotide sequences of mouse KIAA-homologous cDNAs identified by screening of terminal sequences of cDNA clones randomly sampled from size-fractionated libraries.</title>
        <authorList>
            <person name="Okazaki N."/>
            <person name="Kikuno R.F."/>
            <person name="Ohara R."/>
            <person name="Inamoto S."/>
            <person name="Nagase T."/>
            <person name="Ohara O."/>
            <person name="Koga H."/>
        </authorList>
    </citation>
    <scope>NUCLEOTIDE SEQUENCE [LARGE SCALE MRNA] OF 101-1452</scope>
</reference>
<reference key="4">
    <citation type="journal article" date="2010" name="Cell">
        <title>A tissue-specific atlas of mouse protein phosphorylation and expression.</title>
        <authorList>
            <person name="Huttlin E.L."/>
            <person name="Jedrychowski M.P."/>
            <person name="Elias J.E."/>
            <person name="Goswami T."/>
            <person name="Rad R."/>
            <person name="Beausoleil S.A."/>
            <person name="Villen J."/>
            <person name="Haas W."/>
            <person name="Sowa M.E."/>
            <person name="Gygi S.P."/>
        </authorList>
    </citation>
    <scope>IDENTIFICATION BY MASS SPECTROMETRY [LARGE SCALE ANALYSIS]</scope>
    <source>
        <tissue>Brown adipose tissue</tissue>
        <tissue>Heart</tissue>
        <tissue>Lung</tissue>
    </source>
</reference>
<organism>
    <name type="scientific">Mus musculus</name>
    <name type="common">Mouse</name>
    <dbReference type="NCBI Taxonomy" id="10090"/>
    <lineage>
        <taxon>Eukaryota</taxon>
        <taxon>Metazoa</taxon>
        <taxon>Chordata</taxon>
        <taxon>Craniata</taxon>
        <taxon>Vertebrata</taxon>
        <taxon>Euteleostomi</taxon>
        <taxon>Mammalia</taxon>
        <taxon>Eutheria</taxon>
        <taxon>Euarchontoglires</taxon>
        <taxon>Glires</taxon>
        <taxon>Rodentia</taxon>
        <taxon>Myomorpha</taxon>
        <taxon>Muroidea</taxon>
        <taxon>Muridae</taxon>
        <taxon>Murinae</taxon>
        <taxon>Mus</taxon>
        <taxon>Mus</taxon>
    </lineage>
</organism>